<keyword id="KW-0963">Cytoplasm</keyword>
<keyword id="KW-0488">Methylation</keyword>
<keyword id="KW-0648">Protein biosynthesis</keyword>
<keyword id="KW-1185">Reference proteome</keyword>
<keyword id="KW-0688">Ribosomal frameshifting</keyword>
<reference key="1">
    <citation type="journal article" date="2003" name="Proc. Natl. Acad. Sci. U.S.A.">
        <title>Complete genome sequence of Lactobacillus plantarum WCFS1.</title>
        <authorList>
            <person name="Kleerebezem M."/>
            <person name="Boekhorst J."/>
            <person name="van Kranenburg R."/>
            <person name="Molenaar D."/>
            <person name="Kuipers O.P."/>
            <person name="Leer R."/>
            <person name="Tarchini R."/>
            <person name="Peters S.A."/>
            <person name="Sandbrink H.M."/>
            <person name="Fiers M.W.E.J."/>
            <person name="Stiekema W."/>
            <person name="Klein Lankhorst R.M."/>
            <person name="Bron P.A."/>
            <person name="Hoffer S.M."/>
            <person name="Nierop Groot M.N."/>
            <person name="Kerkhoven R."/>
            <person name="De Vries M."/>
            <person name="Ursing B."/>
            <person name="De Vos W.M."/>
            <person name="Siezen R.J."/>
        </authorList>
    </citation>
    <scope>NUCLEOTIDE SEQUENCE [LARGE SCALE GENOMIC DNA]</scope>
    <source>
        <strain>ATCC BAA-793 / NCIMB 8826 / WCFS1</strain>
    </source>
</reference>
<reference key="2">
    <citation type="journal article" date="2012" name="J. Bacteriol.">
        <title>Complete resequencing and reannotation of the Lactobacillus plantarum WCFS1 genome.</title>
        <authorList>
            <person name="Siezen R.J."/>
            <person name="Francke C."/>
            <person name="Renckens B."/>
            <person name="Boekhorst J."/>
            <person name="Wels M."/>
            <person name="Kleerebezem M."/>
            <person name="van Hijum S.A."/>
        </authorList>
    </citation>
    <scope>NUCLEOTIDE SEQUENCE [LARGE SCALE GENOMIC DNA]</scope>
    <scope>GENOME REANNOTATION</scope>
    <source>
        <strain>ATCC BAA-793 / NCIMB 8826 / WCFS1</strain>
    </source>
</reference>
<gene>
    <name evidence="1" type="primary">prfB</name>
    <name type="ordered locus">lp_0741</name>
</gene>
<accession>Q88YL5</accession>
<accession>F9ULW8</accession>
<accession>F9ULW9</accession>
<evidence type="ECO:0000255" key="1">
    <source>
        <dbReference type="HAMAP-Rule" id="MF_00094"/>
    </source>
</evidence>
<evidence type="ECO:0000305" key="2"/>
<protein>
    <recommendedName>
        <fullName evidence="1">Peptide chain release factor 2</fullName>
        <shortName evidence="1">RF-2</shortName>
    </recommendedName>
</protein>
<dbReference type="EMBL" id="AL935263">
    <property type="protein sequence ID" value="CCC78207.1"/>
    <property type="status" value="ALT_SEQ"/>
    <property type="molecule type" value="Genomic_DNA"/>
</dbReference>
<dbReference type="EMBL" id="AL935263">
    <property type="protein sequence ID" value="CCC78208.1"/>
    <property type="status" value="ALT_FRAME"/>
    <property type="molecule type" value="Genomic_DNA"/>
</dbReference>
<dbReference type="RefSeq" id="YP_004888721.1">
    <property type="nucleotide sequence ID" value="NC_004567.2"/>
</dbReference>
<dbReference type="RefSeq" id="YP_004888722.1">
    <property type="nucleotide sequence ID" value="NC_004567.2"/>
</dbReference>
<dbReference type="SMR" id="Q88YL5"/>
<dbReference type="STRING" id="220668.lp_0741"/>
<dbReference type="EnsemblBacteria" id="CCC78207">
    <property type="protein sequence ID" value="CCC78207"/>
    <property type="gene ID" value="lp_0740"/>
</dbReference>
<dbReference type="EnsemblBacteria" id="CCC78208">
    <property type="protein sequence ID" value="CCC78208"/>
    <property type="gene ID" value="lp_0741"/>
</dbReference>
<dbReference type="KEGG" id="lpl:lp_0740"/>
<dbReference type="KEGG" id="lpl:lp_0741"/>
<dbReference type="PATRIC" id="fig|220668.9.peg.623"/>
<dbReference type="eggNOG" id="COG1186">
    <property type="taxonomic scope" value="Bacteria"/>
</dbReference>
<dbReference type="HOGENOM" id="CLU_221244_2_2_9"/>
<dbReference type="OrthoDB" id="9806673at2"/>
<dbReference type="PhylomeDB" id="Q88YL5"/>
<dbReference type="Proteomes" id="UP000000432">
    <property type="component" value="Chromosome"/>
</dbReference>
<dbReference type="GO" id="GO:0005737">
    <property type="term" value="C:cytoplasm"/>
    <property type="evidence" value="ECO:0007669"/>
    <property type="project" value="UniProtKB-SubCell"/>
</dbReference>
<dbReference type="GO" id="GO:0016149">
    <property type="term" value="F:translation release factor activity, codon specific"/>
    <property type="evidence" value="ECO:0007669"/>
    <property type="project" value="UniProtKB-UniRule"/>
</dbReference>
<dbReference type="GO" id="GO:0075523">
    <property type="term" value="P:viral translational frameshifting"/>
    <property type="evidence" value="ECO:0007669"/>
    <property type="project" value="UniProtKB-KW"/>
</dbReference>
<dbReference type="FunFam" id="3.30.160.20:FF:000010">
    <property type="entry name" value="Peptide chain release factor 2"/>
    <property type="match status" value="1"/>
</dbReference>
<dbReference type="Gene3D" id="3.30.160.20">
    <property type="match status" value="1"/>
</dbReference>
<dbReference type="Gene3D" id="3.30.70.1660">
    <property type="match status" value="1"/>
</dbReference>
<dbReference type="Gene3D" id="1.20.58.410">
    <property type="entry name" value="Release factor"/>
    <property type="match status" value="1"/>
</dbReference>
<dbReference type="HAMAP" id="MF_00094">
    <property type="entry name" value="Rel_fac_2"/>
    <property type="match status" value="1"/>
</dbReference>
<dbReference type="InterPro" id="IPR005139">
    <property type="entry name" value="PCRF"/>
</dbReference>
<dbReference type="InterPro" id="IPR000352">
    <property type="entry name" value="Pep_chain_release_fac_I"/>
</dbReference>
<dbReference type="InterPro" id="IPR045853">
    <property type="entry name" value="Pep_chain_release_fac_I_sf"/>
</dbReference>
<dbReference type="InterPro" id="IPR004374">
    <property type="entry name" value="PrfB"/>
</dbReference>
<dbReference type="NCBIfam" id="TIGR00020">
    <property type="entry name" value="prfB"/>
    <property type="match status" value="1"/>
</dbReference>
<dbReference type="PANTHER" id="PTHR43116:SF3">
    <property type="entry name" value="CLASS I PEPTIDE CHAIN RELEASE FACTOR"/>
    <property type="match status" value="1"/>
</dbReference>
<dbReference type="PANTHER" id="PTHR43116">
    <property type="entry name" value="PEPTIDE CHAIN RELEASE FACTOR 2"/>
    <property type="match status" value="1"/>
</dbReference>
<dbReference type="Pfam" id="PF03462">
    <property type="entry name" value="PCRF"/>
    <property type="match status" value="1"/>
</dbReference>
<dbReference type="Pfam" id="PF00472">
    <property type="entry name" value="RF-1"/>
    <property type="match status" value="1"/>
</dbReference>
<dbReference type="SMART" id="SM00937">
    <property type="entry name" value="PCRF"/>
    <property type="match status" value="1"/>
</dbReference>
<dbReference type="SUPFAM" id="SSF75620">
    <property type="entry name" value="Release factor"/>
    <property type="match status" value="1"/>
</dbReference>
<dbReference type="PROSITE" id="PS00745">
    <property type="entry name" value="RF_PROK_I"/>
    <property type="match status" value="1"/>
</dbReference>
<name>RF2_LACPL</name>
<feature type="chain" id="PRO_0000166824" description="Peptide chain release factor 2">
    <location>
        <begin position="1"/>
        <end position="377"/>
    </location>
</feature>
<feature type="modified residue" description="N5-methylglutamine" evidence="1">
    <location>
        <position position="257"/>
    </location>
</feature>
<organism>
    <name type="scientific">Lactiplantibacillus plantarum (strain ATCC BAA-793 / NCIMB 8826 / WCFS1)</name>
    <name type="common">Lactobacillus plantarum</name>
    <dbReference type="NCBI Taxonomy" id="220668"/>
    <lineage>
        <taxon>Bacteria</taxon>
        <taxon>Bacillati</taxon>
        <taxon>Bacillota</taxon>
        <taxon>Bacilli</taxon>
        <taxon>Lactobacillales</taxon>
        <taxon>Lactobacillaceae</taxon>
        <taxon>Lactiplantibacillus</taxon>
    </lineage>
</organism>
<proteinExistence type="inferred from homology"/>
<comment type="function">
    <text evidence="1">Peptide chain release factor 2 directs the termination of translation in response to the peptide chain termination codons UGA and UAA.</text>
</comment>
<comment type="subcellular location">
    <subcellularLocation>
        <location evidence="1">Cytoplasm</location>
    </subcellularLocation>
</comment>
<comment type="PTM">
    <text evidence="1">Methylated by PrmC. Methylation increases the termination efficiency of RF2.</text>
</comment>
<comment type="miscellaneous">
    <text evidence="2">The gene for this protein contains a UGA in-frame termination codon after Leu-30; a naturally occurring frameshift enables complete translation of RF-2. This provides a mechanism for the protein to regulate its own production (Probable).</text>
</comment>
<comment type="similarity">
    <text evidence="1">Belongs to the prokaryotic/mitochondrial release factor family.</text>
</comment>
<comment type="sequence caution" evidence="2">
    <conflict type="erroneous initiation">
        <sequence resource="EMBL-CDS" id="CCC78207"/>
    </conflict>
    <text>Truncated N-terminus.</text>
</comment>
<comment type="sequence caution" evidence="2">
    <conflict type="frameshift">
        <sequence resource="EMBL-CDS" id="CCC78207"/>
    </conflict>
</comment>
<comment type="sequence caution" evidence="2">
    <conflict type="frameshift">
        <sequence resource="EMBL-CDS" id="CCC78208"/>
    </conflict>
</comment>
<sequence length="377" mass="42652">MKEGSFVELSEYKHLIEEMQSAVDDFRGSLDLDALNESIQENEARMAEPGFWDDQAAAQKVIDENNVLKGKYDTFKQLADEVGDLAVAYELLSEEPDAEMQAEFETDFQHAEHDLQQYRLNLLLDGPYDRNNAILEIHPGAGGTESQDWGAMLLRMYTRWAASHNFKVETVDYQAGDEAGIKSVTLLISGHNAYGYLRSEKGVHRLVRISPFDAAGRRHTSFASVDVMPELDDTVDVDIRPEDLKIDVYRASGAGGQHVNKTSSAVRITHVPTGIVVASQAQRSQLQNRQTALNMLRAKLYEREEEKKAKERAAIQGEQMDIGWGSQIRSYVFHPYTMVKDHRTNYESHHGQAVMDGDLDPFMDAYLQWKLAQRNPQ</sequence>